<dbReference type="EC" id="1.1.1.102" evidence="4"/>
<dbReference type="EMBL" id="AE016818">
    <property type="protein sequence ID" value="AAS52521.1"/>
    <property type="molecule type" value="Genomic_DNA"/>
</dbReference>
<dbReference type="RefSeq" id="NP_984697.1">
    <property type="nucleotide sequence ID" value="NM_210050.1"/>
</dbReference>
<dbReference type="SMR" id="Q758B6"/>
<dbReference type="FunCoup" id="Q758B6">
    <property type="interactions" value="125"/>
</dbReference>
<dbReference type="STRING" id="284811.Q758B6"/>
<dbReference type="EnsemblFungi" id="AAS52521">
    <property type="protein sequence ID" value="AAS52521"/>
    <property type="gene ID" value="AGOS_AEL164C"/>
</dbReference>
<dbReference type="GeneID" id="4620882"/>
<dbReference type="KEGG" id="ago:AGOS_AEL164C"/>
<dbReference type="eggNOG" id="KOG1210">
    <property type="taxonomic scope" value="Eukaryota"/>
</dbReference>
<dbReference type="HOGENOM" id="CLU_010194_3_0_1"/>
<dbReference type="InParanoid" id="Q758B6"/>
<dbReference type="OMA" id="PRQWGFF"/>
<dbReference type="OrthoDB" id="10267115at2759"/>
<dbReference type="UniPathway" id="UPA00222"/>
<dbReference type="Proteomes" id="UP000000591">
    <property type="component" value="Chromosome V"/>
</dbReference>
<dbReference type="GO" id="GO:0005789">
    <property type="term" value="C:endoplasmic reticulum membrane"/>
    <property type="evidence" value="ECO:0000318"/>
    <property type="project" value="GO_Central"/>
</dbReference>
<dbReference type="GO" id="GO:0005811">
    <property type="term" value="C:lipid droplet"/>
    <property type="evidence" value="ECO:0007669"/>
    <property type="project" value="EnsemblFungi"/>
</dbReference>
<dbReference type="GO" id="GO:0047560">
    <property type="term" value="F:3-dehydrosphinganine reductase activity"/>
    <property type="evidence" value="ECO:0000250"/>
    <property type="project" value="UniProtKB"/>
</dbReference>
<dbReference type="GO" id="GO:0070402">
    <property type="term" value="F:NADPH binding"/>
    <property type="evidence" value="ECO:0000250"/>
    <property type="project" value="UniProtKB"/>
</dbReference>
<dbReference type="GO" id="GO:0006666">
    <property type="term" value="P:3-keto-sphinganine metabolic process"/>
    <property type="evidence" value="ECO:0000250"/>
    <property type="project" value="UniProtKB"/>
</dbReference>
<dbReference type="GO" id="GO:0030148">
    <property type="term" value="P:sphingolipid biosynthetic process"/>
    <property type="evidence" value="ECO:0000250"/>
    <property type="project" value="UniProtKB"/>
</dbReference>
<dbReference type="CDD" id="cd08939">
    <property type="entry name" value="KDSR-like_SDR_c"/>
    <property type="match status" value="1"/>
</dbReference>
<dbReference type="FunFam" id="3.40.50.720:FF:000578">
    <property type="entry name" value="3-ketodihydrosphingosine reductase"/>
    <property type="match status" value="1"/>
</dbReference>
<dbReference type="Gene3D" id="3.40.50.720">
    <property type="entry name" value="NAD(P)-binding Rossmann-like Domain"/>
    <property type="match status" value="1"/>
</dbReference>
<dbReference type="InterPro" id="IPR045022">
    <property type="entry name" value="KDSR-like"/>
</dbReference>
<dbReference type="InterPro" id="IPR036291">
    <property type="entry name" value="NAD(P)-bd_dom_sf"/>
</dbReference>
<dbReference type="InterPro" id="IPR002347">
    <property type="entry name" value="SDR_fam"/>
</dbReference>
<dbReference type="PANTHER" id="PTHR43550">
    <property type="entry name" value="3-KETODIHYDROSPHINGOSINE REDUCTASE"/>
    <property type="match status" value="1"/>
</dbReference>
<dbReference type="PANTHER" id="PTHR43550:SF3">
    <property type="entry name" value="3-KETODIHYDROSPHINGOSINE REDUCTASE"/>
    <property type="match status" value="1"/>
</dbReference>
<dbReference type="Pfam" id="PF00106">
    <property type="entry name" value="adh_short"/>
    <property type="match status" value="1"/>
</dbReference>
<dbReference type="PRINTS" id="PR00081">
    <property type="entry name" value="GDHRDH"/>
</dbReference>
<dbReference type="SMART" id="SM00822">
    <property type="entry name" value="PKS_KR"/>
    <property type="match status" value="1"/>
</dbReference>
<dbReference type="SUPFAM" id="SSF51735">
    <property type="entry name" value="NAD(P)-binding Rossmann-fold domains"/>
    <property type="match status" value="1"/>
</dbReference>
<comment type="function">
    <text evidence="4">Catalyzes the reduction of 3'-oxosphinganine (3-ketodihydrosphingosine/KDS) to sphinganine (dihydrosphingosine/DHS), the second step of de novo sphingolipid biosynthesis.</text>
</comment>
<comment type="catalytic activity">
    <reaction evidence="4">
        <text>sphinganine + NADP(+) = 3-oxosphinganine + NADPH + H(+)</text>
        <dbReference type="Rhea" id="RHEA:22640"/>
        <dbReference type="ChEBI" id="CHEBI:15378"/>
        <dbReference type="ChEBI" id="CHEBI:57783"/>
        <dbReference type="ChEBI" id="CHEBI:57817"/>
        <dbReference type="ChEBI" id="CHEBI:58299"/>
        <dbReference type="ChEBI" id="CHEBI:58349"/>
        <dbReference type="EC" id="1.1.1.102"/>
    </reaction>
    <physiologicalReaction direction="right-to-left" evidence="4">
        <dbReference type="Rhea" id="RHEA:22642"/>
    </physiologicalReaction>
</comment>
<comment type="pathway">
    <text>Lipid metabolism; sphingolipid metabolism.</text>
</comment>
<comment type="subcellular location">
    <subcellularLocation>
        <location evidence="4">Endoplasmic reticulum membrane</location>
        <topology evidence="7">Single-pass membrane protein</topology>
    </subcellularLocation>
</comment>
<comment type="similarity">
    <text evidence="7">Belongs to the short-chain dehydrogenases/reductases (SDR) family.</text>
</comment>
<feature type="chain" id="PRO_0000054791" description="3-ketodihydrosphingosine reductase TSC10">
    <location>
        <begin position="1"/>
        <end position="307"/>
    </location>
</feature>
<feature type="transmembrane region" description="Helical" evidence="6">
    <location>
        <begin position="261"/>
        <end position="281"/>
    </location>
</feature>
<feature type="short sequence motif" description="GXSXG" evidence="5">
    <location>
        <begin position="14"/>
        <end position="18"/>
    </location>
</feature>
<feature type="active site" description="Proton donor" evidence="2">
    <location>
        <position position="147"/>
    </location>
</feature>
<feature type="active site" description="Proton acceptor" evidence="2">
    <location>
        <position position="161"/>
    </location>
</feature>
<feature type="active site" description="Lowers pKa of active site Tyr" evidence="2">
    <location>
        <position position="165"/>
    </location>
</feature>
<feature type="binding site" evidence="1">
    <location>
        <position position="11"/>
    </location>
    <ligand>
        <name>NADP(+)</name>
        <dbReference type="ChEBI" id="CHEBI:58349"/>
    </ligand>
</feature>
<feature type="binding site" evidence="3">
    <location>
        <position position="14"/>
    </location>
    <ligand>
        <name>NADPH</name>
        <dbReference type="ChEBI" id="CHEBI:57783"/>
    </ligand>
</feature>
<feature type="binding site" evidence="3">
    <location>
        <position position="16"/>
    </location>
    <ligand>
        <name>NADPH</name>
        <dbReference type="ChEBI" id="CHEBI:57783"/>
    </ligand>
</feature>
<feature type="binding site" evidence="3">
    <location>
        <position position="18"/>
    </location>
    <ligand>
        <name>NADPH</name>
        <dbReference type="ChEBI" id="CHEBI:57783"/>
    </ligand>
</feature>
<feature type="binding site" evidence="1">
    <location>
        <position position="19"/>
    </location>
    <ligand>
        <name>NADP(+)</name>
        <dbReference type="ChEBI" id="CHEBI:58349"/>
    </ligand>
</feature>
<feature type="binding site" evidence="3">
    <location>
        <position position="40"/>
    </location>
    <ligand>
        <name>NADPH</name>
        <dbReference type="ChEBI" id="CHEBI:57783"/>
    </ligand>
</feature>
<feature type="binding site" evidence="3">
    <location>
        <position position="44"/>
    </location>
    <ligand>
        <name>NADPH</name>
        <dbReference type="ChEBI" id="CHEBI:57783"/>
    </ligand>
</feature>
<feature type="binding site" evidence="3">
    <location>
        <position position="74"/>
    </location>
    <ligand>
        <name>NADPH</name>
        <dbReference type="ChEBI" id="CHEBI:57783"/>
    </ligand>
</feature>
<feature type="binding site" evidence="2">
    <location>
        <position position="161"/>
    </location>
    <ligand>
        <name>NADP(+)</name>
        <dbReference type="ChEBI" id="CHEBI:58349"/>
    </ligand>
</feature>
<feature type="binding site" evidence="2">
    <location>
        <position position="165"/>
    </location>
    <ligand>
        <name>NADP(+)</name>
        <dbReference type="ChEBI" id="CHEBI:58349"/>
    </ligand>
</feature>
<feature type="binding site" evidence="1">
    <location>
        <position position="194"/>
    </location>
    <ligand>
        <name>NADP(+)</name>
        <dbReference type="ChEBI" id="CHEBI:58349"/>
    </ligand>
</feature>
<name>KDSR_EREGS</name>
<gene>
    <name type="primary">TSC10</name>
    <name type="ordered locus">AEL164C</name>
</gene>
<protein>
    <recommendedName>
        <fullName>3-ketodihydrosphingosine reductase TSC10</fullName>
        <ecNumber evidence="4">1.1.1.102</ecNumber>
    </recommendedName>
    <alternativeName>
        <fullName>3-dehydrosphinganine reductase</fullName>
    </alternativeName>
    <alternativeName>
        <fullName>KDS reductase</fullName>
    </alternativeName>
</protein>
<evidence type="ECO:0000250" key="1">
    <source>
        <dbReference type="UniProtKB" id="L0E2Z4"/>
    </source>
</evidence>
<evidence type="ECO:0000250" key="2">
    <source>
        <dbReference type="UniProtKB" id="O93868"/>
    </source>
</evidence>
<evidence type="ECO:0000250" key="3">
    <source>
        <dbReference type="UniProtKB" id="P0CR36"/>
    </source>
</evidence>
<evidence type="ECO:0000250" key="4">
    <source>
        <dbReference type="UniProtKB" id="P38342"/>
    </source>
</evidence>
<evidence type="ECO:0000250" key="5">
    <source>
        <dbReference type="UniProtKB" id="P40471"/>
    </source>
</evidence>
<evidence type="ECO:0000255" key="6"/>
<evidence type="ECO:0000305" key="7"/>
<accession>Q758B6</accession>
<reference key="1">
    <citation type="journal article" date="2004" name="Science">
        <title>The Ashbya gossypii genome as a tool for mapping the ancient Saccharomyces cerevisiae genome.</title>
        <authorList>
            <person name="Dietrich F.S."/>
            <person name="Voegeli S."/>
            <person name="Brachat S."/>
            <person name="Lerch A."/>
            <person name="Gates K."/>
            <person name="Steiner S."/>
            <person name="Mohr C."/>
            <person name="Poehlmann R."/>
            <person name="Luedi P."/>
            <person name="Choi S."/>
            <person name="Wing R.A."/>
            <person name="Flavier A."/>
            <person name="Gaffney T.D."/>
            <person name="Philippsen P."/>
        </authorList>
    </citation>
    <scope>NUCLEOTIDE SEQUENCE [LARGE SCALE GENOMIC DNA]</scope>
    <source>
        <strain>ATCC 10895 / CBS 109.51 / FGSC 9923 / NRRL Y-1056</strain>
    </source>
</reference>
<reference key="2">
    <citation type="journal article" date="2013" name="G3 (Bethesda)">
        <title>Genomes of Ashbya fungi isolated from insects reveal four mating-type loci, numerous translocations, lack of transposons, and distinct gene duplications.</title>
        <authorList>
            <person name="Dietrich F.S."/>
            <person name="Voegeli S."/>
            <person name="Kuo S."/>
            <person name="Philippsen P."/>
        </authorList>
    </citation>
    <scope>GENOME REANNOTATION</scope>
    <source>
        <strain>ATCC 10895 / CBS 109.51 / FGSC 9923 / NRRL Y-1056</strain>
    </source>
</reference>
<proteinExistence type="inferred from homology"/>
<sequence>MKYELNGQVVLISGGSQGLGRAFAQKYIEESDSTVVIVSRSEEKLTRAGEAICGGARRLGAGGAGRLLYYACNLGDAAAVGGLFATLADAGLQVTQVLFCAGGAVPGLFAELSSAQLAAGVEMNYGTALHLAHGAVRHGARHLVFFSSAAAVYPFIGYSQYAPLKAALRALVAVLRQECDGVRVSCVYPGNFASEGYAEENRTKPAITAAIEGSSEAISCAACCDKIVRGLRSGYDDVTTDFVGWLLLACNMGFNYHSTTYFLWPLGWLLGALVNLLVVPIYMLLCRWDIHKWRTQREETHLAAKTD</sequence>
<organism>
    <name type="scientific">Eremothecium gossypii (strain ATCC 10895 / CBS 109.51 / FGSC 9923 / NRRL Y-1056)</name>
    <name type="common">Yeast</name>
    <name type="synonym">Ashbya gossypii</name>
    <dbReference type="NCBI Taxonomy" id="284811"/>
    <lineage>
        <taxon>Eukaryota</taxon>
        <taxon>Fungi</taxon>
        <taxon>Dikarya</taxon>
        <taxon>Ascomycota</taxon>
        <taxon>Saccharomycotina</taxon>
        <taxon>Saccharomycetes</taxon>
        <taxon>Saccharomycetales</taxon>
        <taxon>Saccharomycetaceae</taxon>
        <taxon>Eremothecium</taxon>
    </lineage>
</organism>
<keyword id="KW-0256">Endoplasmic reticulum</keyword>
<keyword id="KW-0443">Lipid metabolism</keyword>
<keyword id="KW-0472">Membrane</keyword>
<keyword id="KW-0521">NADP</keyword>
<keyword id="KW-0547">Nucleotide-binding</keyword>
<keyword id="KW-0560">Oxidoreductase</keyword>
<keyword id="KW-1185">Reference proteome</keyword>
<keyword id="KW-0746">Sphingolipid metabolism</keyword>
<keyword id="KW-0812">Transmembrane</keyword>
<keyword id="KW-1133">Transmembrane helix</keyword>